<protein>
    <recommendedName>
        <fullName evidence="1">Autonomous glycyl radical cofactor</fullName>
    </recommendedName>
</protein>
<feature type="chain" id="PRO_1000134005" description="Autonomous glycyl radical cofactor">
    <location>
        <begin position="1"/>
        <end position="127"/>
    </location>
</feature>
<feature type="domain" description="Glycine radical" evidence="1">
    <location>
        <begin position="5"/>
        <end position="127"/>
    </location>
</feature>
<feature type="modified residue" description="Glycine radical" evidence="1">
    <location>
        <position position="102"/>
    </location>
</feature>
<keyword id="KW-0556">Organic radical</keyword>
<accession>A9R3Y7</accession>
<name>GRCA_YERPG</name>
<organism>
    <name type="scientific">Yersinia pestis bv. Antiqua (strain Angola)</name>
    <dbReference type="NCBI Taxonomy" id="349746"/>
    <lineage>
        <taxon>Bacteria</taxon>
        <taxon>Pseudomonadati</taxon>
        <taxon>Pseudomonadota</taxon>
        <taxon>Gammaproteobacteria</taxon>
        <taxon>Enterobacterales</taxon>
        <taxon>Yersiniaceae</taxon>
        <taxon>Yersinia</taxon>
    </lineage>
</organism>
<gene>
    <name evidence="1" type="primary">grcA</name>
    <name type="ordered locus">YpAngola_A3596</name>
</gene>
<evidence type="ECO:0000255" key="1">
    <source>
        <dbReference type="HAMAP-Rule" id="MF_00806"/>
    </source>
</evidence>
<proteinExistence type="inferred from homology"/>
<comment type="function">
    <text evidence="1">Acts as a radical domain for damaged PFL and possibly other radical proteins.</text>
</comment>
<sequence>MITGIQITKANNEALLNSFWLLDDEKAELRCVCAKSGYAEDQIVPTSELGEIEYREVPLEVQPTVRVEGGQHLNVNVLSRDTLEDAVKNPEKYPQLTIRVSGYAVRFNSLTPEQQRDVITRTFTESL</sequence>
<dbReference type="EMBL" id="CP000901">
    <property type="protein sequence ID" value="ABX87229.1"/>
    <property type="molecule type" value="Genomic_DNA"/>
</dbReference>
<dbReference type="RefSeq" id="WP_002209664.1">
    <property type="nucleotide sequence ID" value="NZ_CP009935.1"/>
</dbReference>
<dbReference type="SMR" id="A9R3Y7"/>
<dbReference type="GeneID" id="57975986"/>
<dbReference type="KEGG" id="ypg:YpAngola_A3596"/>
<dbReference type="PATRIC" id="fig|349746.12.peg.296"/>
<dbReference type="GO" id="GO:0005829">
    <property type="term" value="C:cytosol"/>
    <property type="evidence" value="ECO:0007669"/>
    <property type="project" value="TreeGrafter"/>
</dbReference>
<dbReference type="GO" id="GO:0008861">
    <property type="term" value="F:formate C-acetyltransferase activity"/>
    <property type="evidence" value="ECO:0007669"/>
    <property type="project" value="TreeGrafter"/>
</dbReference>
<dbReference type="FunFam" id="3.20.70.20:FF:000002">
    <property type="entry name" value="Autonomous glycyl radical cofactor"/>
    <property type="match status" value="1"/>
</dbReference>
<dbReference type="Gene3D" id="3.20.70.20">
    <property type="match status" value="1"/>
</dbReference>
<dbReference type="HAMAP" id="MF_00806">
    <property type="entry name" value="GrcA"/>
    <property type="match status" value="1"/>
</dbReference>
<dbReference type="InterPro" id="IPR050244">
    <property type="entry name" value="Auton_GlycylRad_Cofactor"/>
</dbReference>
<dbReference type="InterPro" id="IPR019777">
    <property type="entry name" value="Form_AcTrfase_GR_CS"/>
</dbReference>
<dbReference type="InterPro" id="IPR001150">
    <property type="entry name" value="Gly_radical"/>
</dbReference>
<dbReference type="InterPro" id="IPR011140">
    <property type="entry name" value="Glycyl_radical_cofactor_GrcA"/>
</dbReference>
<dbReference type="NCBIfam" id="TIGR04365">
    <property type="entry name" value="spare_glycyl"/>
    <property type="match status" value="1"/>
</dbReference>
<dbReference type="PANTHER" id="PTHR30191">
    <property type="entry name" value="FORMATE ACETYLTRANSFERASE"/>
    <property type="match status" value="1"/>
</dbReference>
<dbReference type="PANTHER" id="PTHR30191:SF0">
    <property type="entry name" value="FORMATE ACETYLTRANSFERASE 1"/>
    <property type="match status" value="1"/>
</dbReference>
<dbReference type="Pfam" id="PF01228">
    <property type="entry name" value="Gly_radical"/>
    <property type="match status" value="1"/>
</dbReference>
<dbReference type="PIRSF" id="PIRSF000378">
    <property type="entry name" value="Gly_radicl_yfiD"/>
    <property type="match status" value="1"/>
</dbReference>
<dbReference type="SUPFAM" id="SSF51998">
    <property type="entry name" value="PFL-like glycyl radical enzymes"/>
    <property type="match status" value="1"/>
</dbReference>
<dbReference type="PROSITE" id="PS00850">
    <property type="entry name" value="GLY_RADICAL_1"/>
    <property type="match status" value="1"/>
</dbReference>
<dbReference type="PROSITE" id="PS51149">
    <property type="entry name" value="GLY_RADICAL_2"/>
    <property type="match status" value="1"/>
</dbReference>
<reference key="1">
    <citation type="journal article" date="2010" name="J. Bacteriol.">
        <title>Genome sequence of the deep-rooted Yersinia pestis strain Angola reveals new insights into the evolution and pangenome of the plague bacterium.</title>
        <authorList>
            <person name="Eppinger M."/>
            <person name="Worsham P.L."/>
            <person name="Nikolich M.P."/>
            <person name="Riley D.R."/>
            <person name="Sebastian Y."/>
            <person name="Mou S."/>
            <person name="Achtman M."/>
            <person name="Lindler L.E."/>
            <person name="Ravel J."/>
        </authorList>
    </citation>
    <scope>NUCLEOTIDE SEQUENCE [LARGE SCALE GENOMIC DNA]</scope>
    <source>
        <strain>Angola</strain>
    </source>
</reference>